<accession>A1AV03</accession>
<sequence>MCPGIREWPEDERPREKMLRKGAASLSDAELLALIIRTGDTATGKSAIDLGRELISLFGSSLRELGSADMAEITAIKGMGMAKAAGVKAAFTLASRFQGRRLENLDRFTSPRQVFDYFHYELRDCRREYFLVLLLDGKNRIIRRVQVSEGSLNQSIVHPREVFCQAVKESAAAVILVHNHPTGDPTPSQEDIAITRRLKEAGEIMGIRVLDHIIIGDGEYLSFVERGVL</sequence>
<name>Y3582_PELPD</name>
<gene>
    <name type="ordered locus">Ppro_3582</name>
</gene>
<reference key="1">
    <citation type="submission" date="2006-10" db="EMBL/GenBank/DDBJ databases">
        <title>Complete sequence of chromosome of Pelobacter propionicus DSM 2379.</title>
        <authorList>
            <consortium name="US DOE Joint Genome Institute"/>
            <person name="Copeland A."/>
            <person name="Lucas S."/>
            <person name="Lapidus A."/>
            <person name="Barry K."/>
            <person name="Detter J.C."/>
            <person name="Glavina del Rio T."/>
            <person name="Hammon N."/>
            <person name="Israni S."/>
            <person name="Dalin E."/>
            <person name="Tice H."/>
            <person name="Pitluck S."/>
            <person name="Saunders E."/>
            <person name="Brettin T."/>
            <person name="Bruce D."/>
            <person name="Han C."/>
            <person name="Tapia R."/>
            <person name="Schmutz J."/>
            <person name="Larimer F."/>
            <person name="Land M."/>
            <person name="Hauser L."/>
            <person name="Kyrpides N."/>
            <person name="Kim E."/>
            <person name="Lovley D."/>
            <person name="Richardson P."/>
        </authorList>
    </citation>
    <scope>NUCLEOTIDE SEQUENCE [LARGE SCALE GENOMIC DNA]</scope>
    <source>
        <strain>DSM 2379 / NBRC 103807 / OttBd1</strain>
    </source>
</reference>
<organism>
    <name type="scientific">Pelobacter propionicus (strain DSM 2379 / NBRC 103807 / OttBd1)</name>
    <dbReference type="NCBI Taxonomy" id="338966"/>
    <lineage>
        <taxon>Bacteria</taxon>
        <taxon>Pseudomonadati</taxon>
        <taxon>Thermodesulfobacteriota</taxon>
        <taxon>Desulfuromonadia</taxon>
        <taxon>Desulfuromonadales</taxon>
        <taxon>Desulfuromonadaceae</taxon>
        <taxon>Pelobacter</taxon>
    </lineage>
</organism>
<dbReference type="EMBL" id="CP000482">
    <property type="protein sequence ID" value="ABL01174.1"/>
    <property type="molecule type" value="Genomic_DNA"/>
</dbReference>
<dbReference type="RefSeq" id="WP_011737387.1">
    <property type="nucleotide sequence ID" value="NC_008609.1"/>
</dbReference>
<dbReference type="SMR" id="A1AV03"/>
<dbReference type="STRING" id="338966.Ppro_3582"/>
<dbReference type="KEGG" id="ppd:Ppro_3582"/>
<dbReference type="eggNOG" id="COG2003">
    <property type="taxonomic scope" value="Bacteria"/>
</dbReference>
<dbReference type="HOGENOM" id="CLU_073529_0_2_7"/>
<dbReference type="OrthoDB" id="9804482at2"/>
<dbReference type="Proteomes" id="UP000006732">
    <property type="component" value="Chromosome"/>
</dbReference>
<dbReference type="GO" id="GO:0046872">
    <property type="term" value="F:metal ion binding"/>
    <property type="evidence" value="ECO:0007669"/>
    <property type="project" value="UniProtKB-KW"/>
</dbReference>
<dbReference type="GO" id="GO:0008237">
    <property type="term" value="F:metallopeptidase activity"/>
    <property type="evidence" value="ECO:0007669"/>
    <property type="project" value="UniProtKB-KW"/>
</dbReference>
<dbReference type="GO" id="GO:0006508">
    <property type="term" value="P:proteolysis"/>
    <property type="evidence" value="ECO:0007669"/>
    <property type="project" value="UniProtKB-KW"/>
</dbReference>
<dbReference type="CDD" id="cd08071">
    <property type="entry name" value="MPN_DUF2466"/>
    <property type="match status" value="1"/>
</dbReference>
<dbReference type="Gene3D" id="3.40.140.10">
    <property type="entry name" value="Cytidine Deaminase, domain 2"/>
    <property type="match status" value="1"/>
</dbReference>
<dbReference type="InterPro" id="IPR037518">
    <property type="entry name" value="MPN"/>
</dbReference>
<dbReference type="InterPro" id="IPR025657">
    <property type="entry name" value="RadC_JAB"/>
</dbReference>
<dbReference type="InterPro" id="IPR001405">
    <property type="entry name" value="UPF0758"/>
</dbReference>
<dbReference type="InterPro" id="IPR046778">
    <property type="entry name" value="UPF0758_N"/>
</dbReference>
<dbReference type="NCBIfam" id="NF000642">
    <property type="entry name" value="PRK00024.1"/>
    <property type="match status" value="1"/>
</dbReference>
<dbReference type="NCBIfam" id="TIGR00608">
    <property type="entry name" value="radc"/>
    <property type="match status" value="1"/>
</dbReference>
<dbReference type="PANTHER" id="PTHR30471">
    <property type="entry name" value="DNA REPAIR PROTEIN RADC"/>
    <property type="match status" value="1"/>
</dbReference>
<dbReference type="PANTHER" id="PTHR30471:SF3">
    <property type="entry name" value="UPF0758 PROTEIN YEES-RELATED"/>
    <property type="match status" value="1"/>
</dbReference>
<dbReference type="Pfam" id="PF04002">
    <property type="entry name" value="RadC"/>
    <property type="match status" value="1"/>
</dbReference>
<dbReference type="Pfam" id="PF20582">
    <property type="entry name" value="UPF0758_N"/>
    <property type="match status" value="1"/>
</dbReference>
<dbReference type="SUPFAM" id="SSF102712">
    <property type="entry name" value="JAB1/MPN domain"/>
    <property type="match status" value="1"/>
</dbReference>
<dbReference type="PROSITE" id="PS50249">
    <property type="entry name" value="MPN"/>
    <property type="match status" value="1"/>
</dbReference>
<proteinExistence type="inferred from homology"/>
<comment type="similarity">
    <text evidence="3">Belongs to the UPF0758 family.</text>
</comment>
<protein>
    <recommendedName>
        <fullName>UPF0758 protein Ppro_3582</fullName>
    </recommendedName>
</protein>
<feature type="chain" id="PRO_1000001673" description="UPF0758 protein Ppro_3582">
    <location>
        <begin position="1"/>
        <end position="229"/>
    </location>
</feature>
<feature type="domain" description="MPN" evidence="1">
    <location>
        <begin position="107"/>
        <end position="229"/>
    </location>
</feature>
<feature type="region of interest" description="Disordered" evidence="2">
    <location>
        <begin position="1"/>
        <end position="20"/>
    </location>
</feature>
<feature type="short sequence motif" description="JAMM motif" evidence="1">
    <location>
        <begin position="178"/>
        <end position="191"/>
    </location>
</feature>
<feature type="compositionally biased region" description="Basic and acidic residues" evidence="2">
    <location>
        <begin position="7"/>
        <end position="19"/>
    </location>
</feature>
<feature type="binding site" evidence="1">
    <location>
        <position position="178"/>
    </location>
    <ligand>
        <name>Zn(2+)</name>
        <dbReference type="ChEBI" id="CHEBI:29105"/>
        <note>catalytic</note>
    </ligand>
</feature>
<feature type="binding site" evidence="1">
    <location>
        <position position="180"/>
    </location>
    <ligand>
        <name>Zn(2+)</name>
        <dbReference type="ChEBI" id="CHEBI:29105"/>
        <note>catalytic</note>
    </ligand>
</feature>
<feature type="binding site" evidence="1">
    <location>
        <position position="191"/>
    </location>
    <ligand>
        <name>Zn(2+)</name>
        <dbReference type="ChEBI" id="CHEBI:29105"/>
        <note>catalytic</note>
    </ligand>
</feature>
<evidence type="ECO:0000255" key="1">
    <source>
        <dbReference type="PROSITE-ProRule" id="PRU01182"/>
    </source>
</evidence>
<evidence type="ECO:0000256" key="2">
    <source>
        <dbReference type="SAM" id="MobiDB-lite"/>
    </source>
</evidence>
<evidence type="ECO:0000305" key="3"/>
<keyword id="KW-0378">Hydrolase</keyword>
<keyword id="KW-0479">Metal-binding</keyword>
<keyword id="KW-0482">Metalloprotease</keyword>
<keyword id="KW-0645">Protease</keyword>
<keyword id="KW-1185">Reference proteome</keyword>
<keyword id="KW-0862">Zinc</keyword>